<sequence>MAGGGKHTPTPKAIIHQKFGAKASYTVEEVHDSSQSGCLGLAIPQKGPCLYRCHLQLPEFSVVSNVFKKKKDSEQSAAELALDKLGIRPQNDDLTVDEARDEIVGRIKYIFSDEFLSAEHPLGAHLRAALRRDGERCGSVPVSVIATVDAKINSRCKIINPSVESDPFLAISYVMKAAAKLADYIVASPHGLRRKNAYPSEIVEALATHVSDSLHSREVAAVYIPCIDEEVVELDTLYISSNRHYLDSIAERLGLKDGNQVMISRMFGKASCGSECRLYSEIPKKYLDNSSDASGTSNEDSSHIVKSRNARASYICGQDIHGDAILASVGYRWKSDDLDYDDVTVNSFYRICCGMSPNGIYKISRQAVIAAQLPFAFTTKSNWRGPLPREILGLFCHQHRLAEPILSSSTAPVKSLSDIFRSHKKLKVSGVDDANENLSRQKEDTPGLGHGFRCEVKIFTKSQDLVLECSPRKFYEKENDAIQNASLKALLWFSKFFADLDVDGEQSCDTDDDQDTKSSSPNVFAAPPILQKEHSSESKNTNVLSAEKRVQSITNGSVVSICYSLSLAVDPEYSSDGESPREDNESNEEMESEYSANCESSVELIESNEEIEFEVGTGSMNPHIESEVTQMTVGEYASFRMTPPDAAEALILAVGSDTVRIRSLLSERPCLNYNILLLGVKGPSEERMEAAFFKPPLSKQRVEYALKHIRESSASTLVDFGCGSGSLLDSLLDYPTSLQTIIGVDISPKGLARAAKMLHVKLNKEACNVKSATLYDGSILEFDSRLHDVDIGTCLEVIEHMEEDQACEFGEKVLSLFHPKLLIVSTPNYEFNTILQRSTPETQEENNSEPQLPKFRNHDHKFEWTREQFNQWASKLGKRHNYSVEFSGVGGSGEVEPGFASQIAIFRREASSVENVAESSMQPYKVIWEWKKEDVEKKKTDL</sequence>
<comment type="function">
    <text evidence="3 4 6 7">Methyltransferase that adds a methyl group to the ribose of the last nucleotide of small RNAs (sRNAs). This protects the 3'-end of sRNAs from uridylation activity and subsequent degradation. Can methylate 3'-end of microRNAs (miRNAs), small interfering RNAs (siRNas) and trans-acting small interfering RNAs (ta-siRNAs). Involved in plant development through its role in small RNAs processing. Required for the specification of reproductive organ identities and the probable repression of A class genes. May control floral determinacy possibly by regulating the expression of the C class floral homeotic gene AGAMOUS (AG).</text>
</comment>
<comment type="catalytic activity">
    <reaction evidence="9">
        <text>small RNA 3'-end nucleotide + S-adenosyl-L-methionine = small RNA 3'-end 2'-O-methylnucleotide + S-adenosyl-L-homocysteine + H(+)</text>
        <dbReference type="Rhea" id="RHEA:37887"/>
        <dbReference type="Rhea" id="RHEA-COMP:10415"/>
        <dbReference type="Rhea" id="RHEA-COMP:10416"/>
        <dbReference type="ChEBI" id="CHEBI:15378"/>
        <dbReference type="ChEBI" id="CHEBI:57856"/>
        <dbReference type="ChEBI" id="CHEBI:59789"/>
        <dbReference type="ChEBI" id="CHEBI:74896"/>
        <dbReference type="ChEBI" id="CHEBI:74898"/>
        <dbReference type="EC" id="2.1.1.386"/>
    </reaction>
</comment>
<comment type="cofactor">
    <cofactor evidence="8">
        <name>Mg(2+)</name>
        <dbReference type="ChEBI" id="CHEBI:18420"/>
    </cofactor>
    <text evidence="8">Binds 1 Mg(2+) ion per subunit.</text>
</comment>
<comment type="subunit">
    <text evidence="8">Binds small RNA duplexes as monomer.</text>
</comment>
<comment type="subcellular location">
    <subcellularLocation>
        <location evidence="5">Nucleus</location>
    </subcellularLocation>
</comment>
<comment type="tissue specificity">
    <text evidence="3 4">Expressed in stems, leaves and inflorescences.</text>
</comment>
<comment type="disruption phenotype">
    <text evidence="3 4 7">Reduced organ size, altered rosette leaf shape and increased number of coflorescences. Urydilation of miRNA 3'-ends.</text>
</comment>
<comment type="similarity">
    <text evidence="9">Belongs to the methyltransferase superfamily. HEN1 family.</text>
</comment>
<comment type="sequence caution" evidence="9">
    <conflict type="erroneous gene model prediction">
        <sequence resource="EMBL-CDS" id="CAB45886"/>
    </conflict>
</comment>
<comment type="sequence caution" evidence="9">
    <conflict type="erroneous gene model prediction">
        <sequence resource="EMBL-CDS" id="CAB79091"/>
    </conflict>
</comment>
<feature type="chain" id="PRO_0000404658" description="Small RNA 2'-O-methyltransferase">
    <location>
        <begin position="1"/>
        <end position="942"/>
    </location>
</feature>
<feature type="domain" description="DRBM">
    <location>
        <begin position="19"/>
        <end position="87"/>
    </location>
</feature>
<feature type="domain" description="HTH La-type RNA-binding" evidence="1">
    <location>
        <begin position="93"/>
        <end position="204"/>
    </location>
</feature>
<feature type="region of interest" description="Disordered" evidence="2">
    <location>
        <begin position="505"/>
        <end position="542"/>
    </location>
</feature>
<feature type="region of interest" description="Disordered" evidence="2">
    <location>
        <begin position="571"/>
        <end position="596"/>
    </location>
</feature>
<feature type="region of interest" description="Disordered" evidence="2">
    <location>
        <begin position="837"/>
        <end position="856"/>
    </location>
</feature>
<feature type="compositionally biased region" description="Acidic residues" evidence="2">
    <location>
        <begin position="505"/>
        <end position="514"/>
    </location>
</feature>
<feature type="binding site" evidence="8 10">
    <location>
        <position position="726"/>
    </location>
    <ligand>
        <name>S-adenosyl-L-methionine</name>
        <dbReference type="ChEBI" id="CHEBI:59789"/>
    </ligand>
</feature>
<feature type="binding site" evidence="8 10">
    <location>
        <position position="745"/>
    </location>
    <ligand>
        <name>S-adenosyl-L-methionine</name>
        <dbReference type="ChEBI" id="CHEBI:59789"/>
    </ligand>
</feature>
<feature type="binding site" evidence="8 10">
    <location>
        <begin position="778"/>
        <end position="779"/>
    </location>
    <ligand>
        <name>S-adenosyl-L-methionine</name>
        <dbReference type="ChEBI" id="CHEBI:59789"/>
    </ligand>
</feature>
<feature type="binding site" evidence="8 10">
    <location>
        <position position="795"/>
    </location>
    <ligand>
        <name>S-adenosyl-L-methionine</name>
        <dbReference type="ChEBI" id="CHEBI:59789"/>
    </ligand>
</feature>
<feature type="binding site" evidence="8 10">
    <location>
        <position position="796"/>
    </location>
    <ligand>
        <name>Mg(2+)</name>
        <dbReference type="ChEBI" id="CHEBI:18420"/>
    </ligand>
</feature>
<feature type="binding site" evidence="8 10">
    <location>
        <position position="799"/>
    </location>
    <ligand>
        <name>Mg(2+)</name>
        <dbReference type="ChEBI" id="CHEBI:18420"/>
    </ligand>
</feature>
<feature type="binding site" evidence="8 10">
    <location>
        <position position="800"/>
    </location>
    <ligand>
        <name>Mg(2+)</name>
        <dbReference type="ChEBI" id="CHEBI:18420"/>
    </ligand>
</feature>
<feature type="binding site" evidence="8 10">
    <location>
        <position position="860"/>
    </location>
    <ligand>
        <name>Mg(2+)</name>
        <dbReference type="ChEBI" id="CHEBI:18420"/>
    </ligand>
</feature>
<feature type="mutagenesis site" description="In crm2-1; compact inflorescence with several flower buds at the tip." evidence="4">
    <location>
        <position position="68"/>
    </location>
</feature>
<feature type="mutagenesis site" description="No effect on RNA binding and transferase activity." evidence="8">
    <original>Y</original>
    <variation>A</variation>
    <location>
        <position position="109"/>
    </location>
</feature>
<feature type="mutagenesis site" description="Loss of RNA binding and transferase activity." evidence="8">
    <original>W</original>
    <variation>A</variation>
    <location>
        <position position="333"/>
    </location>
</feature>
<feature type="mutagenesis site" description="No effect on transferase activity." evidence="8">
    <original>L</original>
    <variation>P</variation>
    <location>
        <position position="604"/>
    </location>
</feature>
<feature type="mutagenesis site" description="Reduces transferase activity." evidence="8">
    <original>R</original>
    <variation>A</variation>
    <location>
        <position position="701"/>
    </location>
</feature>
<feature type="mutagenesis site" description="In hen1-2; alters organ development and floral determinacy." evidence="3">
    <original>D</original>
    <variation>N</variation>
    <location>
        <position position="719"/>
    </location>
</feature>
<feature type="mutagenesis site" description="Loss of transferase activity." evidence="8">
    <original>E</original>
    <variation>A</variation>
    <location>
        <position position="796"/>
    </location>
</feature>
<feature type="mutagenesis site" description="Loss of transferase activity; when associated with A-800." evidence="8">
    <original>E</original>
    <variation>A</variation>
    <location>
        <position position="799"/>
    </location>
</feature>
<feature type="mutagenesis site" description="Loss of transferase activity; when associated with A-799." evidence="8">
    <original>H</original>
    <variation>A</variation>
    <location>
        <position position="800"/>
    </location>
</feature>
<feature type="mutagenesis site" description="Strongly decreases transferase activity." evidence="8">
    <original>H</original>
    <variation>Q</variation>
    <location>
        <position position="800"/>
    </location>
</feature>
<feature type="mutagenesis site" description="Reduces transferase activity." evidence="8">
    <original>R</original>
    <variation>A</variation>
    <location>
        <position position="856"/>
    </location>
</feature>
<feature type="mutagenesis site" description="Loss of transferase activity." evidence="8">
    <original>H</original>
    <variation>A</variation>
    <variation>Q</variation>
    <location>
        <position position="860"/>
    </location>
</feature>
<feature type="sequence conflict" description="In Ref. 1; AAC97105 and 2; AAL05056." evidence="9" ref="1 2">
    <original>L</original>
    <variation>P</variation>
    <location>
        <position position="39"/>
    </location>
</feature>
<feature type="sequence conflict" description="In Ref. 1; AAC97105." evidence="9" ref="1">
    <original>S</original>
    <variation>Y</variation>
    <location>
        <position position="552"/>
    </location>
</feature>
<feature type="sequence conflict" description="In Ref. 1; AAC97105." evidence="9" ref="1">
    <original>R</original>
    <variation>K</variation>
    <location>
        <position position="660"/>
    </location>
</feature>
<feature type="helix" evidence="11">
    <location>
        <begin position="12"/>
        <end position="17"/>
    </location>
</feature>
<feature type="helix" evidence="11">
    <location>
        <begin position="18"/>
        <end position="22"/>
    </location>
</feature>
<feature type="strand" evidence="11">
    <location>
        <begin position="23"/>
        <end position="30"/>
    </location>
</feature>
<feature type="strand" evidence="11">
    <location>
        <begin position="50"/>
        <end position="56"/>
    </location>
</feature>
<feature type="strand" evidence="11">
    <location>
        <begin position="61"/>
        <end position="63"/>
    </location>
</feature>
<feature type="helix" evidence="11">
    <location>
        <begin position="70"/>
        <end position="82"/>
    </location>
</feature>
<feature type="turn" evidence="11">
    <location>
        <begin position="83"/>
        <end position="86"/>
    </location>
</feature>
<feature type="turn" evidence="11">
    <location>
        <begin position="88"/>
        <end position="90"/>
    </location>
</feature>
<feature type="helix" evidence="11">
    <location>
        <begin position="96"/>
        <end position="110"/>
    </location>
</feature>
<feature type="helix" evidence="11">
    <location>
        <begin position="114"/>
        <end position="117"/>
    </location>
</feature>
<feature type="helix" evidence="11">
    <location>
        <begin position="122"/>
        <end position="130"/>
    </location>
</feature>
<feature type="helix" evidence="11">
    <location>
        <begin position="134"/>
        <end position="136"/>
    </location>
</feature>
<feature type="helix" evidence="11">
    <location>
        <begin position="142"/>
        <end position="147"/>
    </location>
</feature>
<feature type="helix" evidence="11">
    <location>
        <begin position="150"/>
        <end position="159"/>
    </location>
</feature>
<feature type="helix" evidence="11">
    <location>
        <begin position="162"/>
        <end position="165"/>
    </location>
</feature>
<feature type="helix" evidence="11">
    <location>
        <begin position="168"/>
        <end position="180"/>
    </location>
</feature>
<feature type="strand" evidence="11">
    <location>
        <begin position="183"/>
        <end position="188"/>
    </location>
</feature>
<feature type="strand" evidence="11">
    <location>
        <begin position="191"/>
        <end position="196"/>
    </location>
</feature>
<feature type="helix" evidence="11">
    <location>
        <begin position="200"/>
        <end position="208"/>
    </location>
</feature>
<feature type="strand" evidence="11">
    <location>
        <begin position="217"/>
        <end position="224"/>
    </location>
</feature>
<feature type="strand" evidence="11">
    <location>
        <begin position="233"/>
        <end position="239"/>
    </location>
</feature>
<feature type="helix" evidence="11">
    <location>
        <begin position="245"/>
        <end position="252"/>
    </location>
</feature>
<feature type="strand" evidence="11">
    <location>
        <begin position="258"/>
        <end position="263"/>
    </location>
</feature>
<feature type="helix" evidence="11">
    <location>
        <begin position="269"/>
        <end position="272"/>
    </location>
</feature>
<feature type="strand" evidence="11">
    <location>
        <begin position="276"/>
        <end position="281"/>
    </location>
</feature>
<feature type="helix" evidence="11">
    <location>
        <begin position="284"/>
        <end position="287"/>
    </location>
</feature>
<feature type="helix" evidence="11">
    <location>
        <begin position="310"/>
        <end position="316"/>
    </location>
</feature>
<feature type="strand" evidence="11">
    <location>
        <begin position="324"/>
        <end position="331"/>
    </location>
</feature>
<feature type="strand" evidence="11">
    <location>
        <begin position="336"/>
        <end position="341"/>
    </location>
</feature>
<feature type="helix" evidence="11">
    <location>
        <begin position="345"/>
        <end position="353"/>
    </location>
</feature>
<feature type="helix" evidence="11">
    <location>
        <begin position="357"/>
        <end position="365"/>
    </location>
</feature>
<feature type="turn" evidence="11">
    <location>
        <begin position="368"/>
        <end position="370"/>
    </location>
</feature>
<feature type="turn" evidence="11">
    <location>
        <begin position="380"/>
        <end position="382"/>
    </location>
</feature>
<feature type="helix" evidence="11">
    <location>
        <begin position="388"/>
        <end position="397"/>
    </location>
</feature>
<feature type="turn" evidence="11">
    <location>
        <begin position="398"/>
        <end position="400"/>
    </location>
</feature>
<feature type="strand" evidence="11">
    <location>
        <begin position="405"/>
        <end position="407"/>
    </location>
</feature>
<feature type="strand" evidence="11">
    <location>
        <begin position="456"/>
        <end position="461"/>
    </location>
</feature>
<feature type="strand" evidence="11">
    <location>
        <begin position="464"/>
        <end position="469"/>
    </location>
</feature>
<feature type="helix" evidence="11">
    <location>
        <begin position="478"/>
        <end position="494"/>
    </location>
</feature>
<feature type="turn" evidence="11">
    <location>
        <begin position="548"/>
        <end position="551"/>
    </location>
</feature>
<feature type="strand" evidence="11">
    <location>
        <begin position="557"/>
        <end position="569"/>
    </location>
</feature>
<feature type="strand" evidence="11">
    <location>
        <begin position="603"/>
        <end position="615"/>
    </location>
</feature>
<feature type="turn" evidence="11">
    <location>
        <begin position="616"/>
        <end position="618"/>
    </location>
</feature>
<feature type="helix" evidence="11">
    <location>
        <begin position="622"/>
        <end position="628"/>
    </location>
</feature>
<feature type="strand" evidence="11">
    <location>
        <begin position="636"/>
        <end position="643"/>
    </location>
</feature>
<feature type="helix" evidence="11">
    <location>
        <begin position="648"/>
        <end position="654"/>
    </location>
</feature>
<feature type="helix" evidence="11">
    <location>
        <begin position="658"/>
        <end position="664"/>
    </location>
</feature>
<feature type="strand" evidence="11">
    <location>
        <begin position="669"/>
        <end position="681"/>
    </location>
</feature>
<feature type="strand" evidence="11">
    <location>
        <begin position="693"/>
        <end position="695"/>
    </location>
</feature>
<feature type="helix" evidence="11">
    <location>
        <begin position="697"/>
        <end position="711"/>
    </location>
</feature>
<feature type="strand" evidence="11">
    <location>
        <begin position="715"/>
        <end position="720"/>
    </location>
</feature>
<feature type="strand" evidence="11">
    <location>
        <begin position="723"/>
        <end position="725"/>
    </location>
</feature>
<feature type="helix" evidence="11">
    <location>
        <begin position="726"/>
        <end position="731"/>
    </location>
</feature>
<feature type="strand" evidence="11">
    <location>
        <begin position="740"/>
        <end position="746"/>
    </location>
</feature>
<feature type="helix" evidence="11">
    <location>
        <begin position="748"/>
        <end position="761"/>
    </location>
</feature>
<feature type="turn" evidence="11">
    <location>
        <begin position="762"/>
        <end position="765"/>
    </location>
</feature>
<feature type="strand" evidence="11">
    <location>
        <begin position="770"/>
        <end position="777"/>
    </location>
</feature>
<feature type="strand" evidence="11">
    <location>
        <begin position="791"/>
        <end position="796"/>
    </location>
</feature>
<feature type="helix" evidence="11">
    <location>
        <begin position="798"/>
        <end position="800"/>
    </location>
</feature>
<feature type="helix" evidence="11">
    <location>
        <begin position="803"/>
        <end position="815"/>
    </location>
</feature>
<feature type="strand" evidence="11">
    <location>
        <begin position="820"/>
        <end position="826"/>
    </location>
</feature>
<feature type="helix" evidence="11">
    <location>
        <begin position="829"/>
        <end position="831"/>
    </location>
</feature>
<feature type="helix" evidence="11">
    <location>
        <begin position="832"/>
        <end position="835"/>
    </location>
</feature>
<feature type="helix" evidence="11">
    <location>
        <begin position="866"/>
        <end position="879"/>
    </location>
</feature>
<feature type="strand" evidence="11">
    <location>
        <begin position="882"/>
        <end position="891"/>
    </location>
</feature>
<feature type="strand" evidence="11">
    <location>
        <begin position="893"/>
        <end position="895"/>
    </location>
</feature>
<feature type="strand" evidence="11">
    <location>
        <begin position="900"/>
        <end position="909"/>
    </location>
</feature>
<feature type="strand" evidence="11">
    <location>
        <begin position="926"/>
        <end position="931"/>
    </location>
</feature>
<keyword id="KW-0002">3D-structure</keyword>
<keyword id="KW-0460">Magnesium</keyword>
<keyword id="KW-0479">Metal-binding</keyword>
<keyword id="KW-0489">Methyltransferase</keyword>
<keyword id="KW-0539">Nucleus</keyword>
<keyword id="KW-1185">Reference proteome</keyword>
<keyword id="KW-0694">RNA-binding</keyword>
<keyword id="KW-0943">RNA-mediated gene silencing</keyword>
<keyword id="KW-0949">S-adenosyl-L-methionine</keyword>
<keyword id="KW-0808">Transferase</keyword>
<reference key="1">
    <citation type="journal article" date="1999" name="Sex. Plant Reprod.">
        <title>Anther development defects in Arabidopsis thaliana male-sterile mutants.</title>
        <authorList>
            <person name="Sanders P.M."/>
            <person name="Bui A.Q."/>
            <person name="Weterings K."/>
            <person name="McIntire K.N."/>
            <person name="Hsu Y.C."/>
            <person name="Lee P.Y."/>
            <person name="Truong M.T."/>
            <person name="Beals T.B."/>
            <person name="Goldberg R.B."/>
        </authorList>
        <dbReference type="AGRICOLA" id="IND21977244"/>
    </citation>
    <scope>NUCLEOTIDE SEQUENCE [GENOMIC DNA]</scope>
    <source>
        <strain>cv. Wassilewskija</strain>
    </source>
</reference>
<reference key="2">
    <citation type="journal article" date="2002" name="Development">
        <title>HEN1 functions pleiotropically in Arabidopsis development and acts in C function in the flower.</title>
        <authorList>
            <person name="Chen X."/>
            <person name="Liu J."/>
            <person name="Cheng Y."/>
            <person name="Jia D."/>
        </authorList>
    </citation>
    <scope>NUCLEOTIDE SEQUENCE [MRNA]</scope>
    <scope>FUNCTION</scope>
    <scope>TISSUE SPECIFICITY</scope>
    <scope>DISRUPTION PHENOTYPE</scope>
    <scope>MUTAGENESIS OF ASP-719</scope>
    <source>
        <strain>cv. Landsberg erecta</strain>
    </source>
</reference>
<reference key="3">
    <citation type="journal article" date="2002" name="Plant Cell Physiol.">
        <title>Formation of corymb-like inflorescences due to delay in bolting and flower development in the corymbosa2 mutant of Arabidopsis.</title>
        <authorList>
            <person name="Suzuki M."/>
            <person name="Takahashi T."/>
            <person name="Komeda Y."/>
        </authorList>
    </citation>
    <scope>NUCLEOTIDE SEQUENCE [MRNA]</scope>
    <scope>FUNCTION</scope>
    <scope>TISSUE SPECIFICITY</scope>
    <scope>DISRUPTION PHENOTYPE</scope>
    <scope>MUTAGENESIS OF LYS-68</scope>
</reference>
<reference key="4">
    <citation type="journal article" date="1999" name="Nature">
        <title>Sequence and analysis of chromosome 4 of the plant Arabidopsis thaliana.</title>
        <authorList>
            <person name="Mayer K.F.X."/>
            <person name="Schueller C."/>
            <person name="Wambutt R."/>
            <person name="Murphy G."/>
            <person name="Volckaert G."/>
            <person name="Pohl T."/>
            <person name="Duesterhoeft A."/>
            <person name="Stiekema W."/>
            <person name="Entian K.-D."/>
            <person name="Terryn N."/>
            <person name="Harris B."/>
            <person name="Ansorge W."/>
            <person name="Brandt P."/>
            <person name="Grivell L.A."/>
            <person name="Rieger M."/>
            <person name="Weichselgartner M."/>
            <person name="de Simone V."/>
            <person name="Obermaier B."/>
            <person name="Mache R."/>
            <person name="Mueller M."/>
            <person name="Kreis M."/>
            <person name="Delseny M."/>
            <person name="Puigdomenech P."/>
            <person name="Watson M."/>
            <person name="Schmidtheini T."/>
            <person name="Reichert B."/>
            <person name="Portetelle D."/>
            <person name="Perez-Alonso M."/>
            <person name="Boutry M."/>
            <person name="Bancroft I."/>
            <person name="Vos P."/>
            <person name="Hoheisel J."/>
            <person name="Zimmermann W."/>
            <person name="Wedler H."/>
            <person name="Ridley P."/>
            <person name="Langham S.-A."/>
            <person name="McCullagh B."/>
            <person name="Bilham L."/>
            <person name="Robben J."/>
            <person name="van der Schueren J."/>
            <person name="Grymonprez B."/>
            <person name="Chuang Y.-J."/>
            <person name="Vandenbussche F."/>
            <person name="Braeken M."/>
            <person name="Weltjens I."/>
            <person name="Voet M."/>
            <person name="Bastiaens I."/>
            <person name="Aert R."/>
            <person name="Defoor E."/>
            <person name="Weitzenegger T."/>
            <person name="Bothe G."/>
            <person name="Ramsperger U."/>
            <person name="Hilbert H."/>
            <person name="Braun M."/>
            <person name="Holzer E."/>
            <person name="Brandt A."/>
            <person name="Peters S."/>
            <person name="van Staveren M."/>
            <person name="Dirkse W."/>
            <person name="Mooijman P."/>
            <person name="Klein Lankhorst R."/>
            <person name="Rose M."/>
            <person name="Hauf J."/>
            <person name="Koetter P."/>
            <person name="Berneiser S."/>
            <person name="Hempel S."/>
            <person name="Feldpausch M."/>
            <person name="Lamberth S."/>
            <person name="Van den Daele H."/>
            <person name="De Keyser A."/>
            <person name="Buysshaert C."/>
            <person name="Gielen J."/>
            <person name="Villarroel R."/>
            <person name="De Clercq R."/>
            <person name="van Montagu M."/>
            <person name="Rogers J."/>
            <person name="Cronin A."/>
            <person name="Quail M.A."/>
            <person name="Bray-Allen S."/>
            <person name="Clark L."/>
            <person name="Doggett J."/>
            <person name="Hall S."/>
            <person name="Kay M."/>
            <person name="Lennard N."/>
            <person name="McLay K."/>
            <person name="Mayes R."/>
            <person name="Pettett A."/>
            <person name="Rajandream M.A."/>
            <person name="Lyne M."/>
            <person name="Benes V."/>
            <person name="Rechmann S."/>
            <person name="Borkova D."/>
            <person name="Bloecker H."/>
            <person name="Scharfe M."/>
            <person name="Grimm M."/>
            <person name="Loehnert T.-H."/>
            <person name="Dose S."/>
            <person name="de Haan M."/>
            <person name="Maarse A.C."/>
            <person name="Schaefer M."/>
            <person name="Mueller-Auer S."/>
            <person name="Gabel C."/>
            <person name="Fuchs M."/>
            <person name="Fartmann B."/>
            <person name="Granderath K."/>
            <person name="Dauner D."/>
            <person name="Herzl A."/>
            <person name="Neumann S."/>
            <person name="Argiriou A."/>
            <person name="Vitale D."/>
            <person name="Liguori R."/>
            <person name="Piravandi E."/>
            <person name="Massenet O."/>
            <person name="Quigley F."/>
            <person name="Clabauld G."/>
            <person name="Muendlein A."/>
            <person name="Felber R."/>
            <person name="Schnabl S."/>
            <person name="Hiller R."/>
            <person name="Schmidt W."/>
            <person name="Lecharny A."/>
            <person name="Aubourg S."/>
            <person name="Chefdor F."/>
            <person name="Cooke R."/>
            <person name="Berger C."/>
            <person name="Monfort A."/>
            <person name="Casacuberta E."/>
            <person name="Gibbons T."/>
            <person name="Weber N."/>
            <person name="Vandenbol M."/>
            <person name="Bargues M."/>
            <person name="Terol J."/>
            <person name="Torres A."/>
            <person name="Perez-Perez A."/>
            <person name="Purnelle B."/>
            <person name="Bent E."/>
            <person name="Johnson S."/>
            <person name="Tacon D."/>
            <person name="Jesse T."/>
            <person name="Heijnen L."/>
            <person name="Schwarz S."/>
            <person name="Scholler P."/>
            <person name="Heber S."/>
            <person name="Francs P."/>
            <person name="Bielke C."/>
            <person name="Frishman D."/>
            <person name="Haase D."/>
            <person name="Lemcke K."/>
            <person name="Mewes H.-W."/>
            <person name="Stocker S."/>
            <person name="Zaccaria P."/>
            <person name="Bevan M."/>
            <person name="Wilson R.K."/>
            <person name="de la Bastide M."/>
            <person name="Habermann K."/>
            <person name="Parnell L."/>
            <person name="Dedhia N."/>
            <person name="Gnoj L."/>
            <person name="Schutz K."/>
            <person name="Huang E."/>
            <person name="Spiegel L."/>
            <person name="Sekhon M."/>
            <person name="Murray J."/>
            <person name="Sheet P."/>
            <person name="Cordes M."/>
            <person name="Abu-Threideh J."/>
            <person name="Stoneking T."/>
            <person name="Kalicki J."/>
            <person name="Graves T."/>
            <person name="Harmon G."/>
            <person name="Edwards J."/>
            <person name="Latreille P."/>
            <person name="Courtney L."/>
            <person name="Cloud J."/>
            <person name="Abbott A."/>
            <person name="Scott K."/>
            <person name="Johnson D."/>
            <person name="Minx P."/>
            <person name="Bentley D."/>
            <person name="Fulton B."/>
            <person name="Miller N."/>
            <person name="Greco T."/>
            <person name="Kemp K."/>
            <person name="Kramer J."/>
            <person name="Fulton L."/>
            <person name="Mardis E."/>
            <person name="Dante M."/>
            <person name="Pepin K."/>
            <person name="Hillier L.W."/>
            <person name="Nelson J."/>
            <person name="Spieth J."/>
            <person name="Ryan E."/>
            <person name="Andrews S."/>
            <person name="Geisel C."/>
            <person name="Layman D."/>
            <person name="Du H."/>
            <person name="Ali J."/>
            <person name="Berghoff A."/>
            <person name="Jones K."/>
            <person name="Drone K."/>
            <person name="Cotton M."/>
            <person name="Joshu C."/>
            <person name="Antonoiu B."/>
            <person name="Zidanic M."/>
            <person name="Strong C."/>
            <person name="Sun H."/>
            <person name="Lamar B."/>
            <person name="Yordan C."/>
            <person name="Ma P."/>
            <person name="Zhong J."/>
            <person name="Preston R."/>
            <person name="Vil D."/>
            <person name="Shekher M."/>
            <person name="Matero A."/>
            <person name="Shah R."/>
            <person name="Swaby I.K."/>
            <person name="O'Shaughnessy A."/>
            <person name="Rodriguez M."/>
            <person name="Hoffman J."/>
            <person name="Till S."/>
            <person name="Granat S."/>
            <person name="Shohdy N."/>
            <person name="Hasegawa A."/>
            <person name="Hameed A."/>
            <person name="Lodhi M."/>
            <person name="Johnson A."/>
            <person name="Chen E."/>
            <person name="Marra M.A."/>
            <person name="Martienssen R."/>
            <person name="McCombie W.R."/>
        </authorList>
    </citation>
    <scope>NUCLEOTIDE SEQUENCE [LARGE SCALE GENOMIC DNA]</scope>
    <source>
        <strain>cv. Columbia</strain>
    </source>
</reference>
<reference key="5">
    <citation type="journal article" date="2017" name="Plant J.">
        <title>Araport11: a complete reannotation of the Arabidopsis thaliana reference genome.</title>
        <authorList>
            <person name="Cheng C.Y."/>
            <person name="Krishnakumar V."/>
            <person name="Chan A.P."/>
            <person name="Thibaud-Nissen F."/>
            <person name="Schobel S."/>
            <person name="Town C.D."/>
        </authorList>
    </citation>
    <scope>GENOME REANNOTATION</scope>
    <source>
        <strain>cv. Columbia</strain>
    </source>
</reference>
<reference key="6">
    <citation type="journal article" date="2004" name="PLoS Biol.">
        <title>Genetic and functional diversification of small RNA pathways in plants.</title>
        <authorList>
            <person name="Xie Z."/>
            <person name="Johansen L.K."/>
            <person name="Gustafson A.M."/>
            <person name="Kasschau K.D."/>
            <person name="Lellis A.D."/>
            <person name="Zilberman D."/>
            <person name="Jacobsen S.E."/>
            <person name="Carrington J.C."/>
        </authorList>
    </citation>
    <scope>SUBCELLULAR LOCATION</scope>
</reference>
<reference key="7">
    <citation type="journal article" date="2005" name="Curr. Biol.">
        <title>Methylation protects miRNAs and siRNAs from a 3'-end uridylation activity in Arabidopsis.</title>
        <authorList>
            <person name="Li J."/>
            <person name="Yang Z."/>
            <person name="Yu B."/>
            <person name="Liu J."/>
            <person name="Chen X."/>
        </authorList>
    </citation>
    <scope>FUNCTION</scope>
    <scope>DISRUPTION PHENOTYPE</scope>
</reference>
<reference key="8">
    <citation type="journal article" date="2005" name="Science">
        <title>Methylation as a crucial step in plant microRNA biogenesis.</title>
        <authorList>
            <person name="Yu B."/>
            <person name="Yang Z."/>
            <person name="Li J."/>
            <person name="Minakhina S."/>
            <person name="Yang M."/>
            <person name="Padgett R.W."/>
            <person name="Steward R."/>
            <person name="Chen X."/>
        </authorList>
    </citation>
    <scope>FUNCTION</scope>
</reference>
<reference key="9">
    <citation type="journal article" date="2009" name="Nature">
        <title>Structural insights into mechanisms of the small RNA methyltransferase HEN1.</title>
        <authorList>
            <person name="Huang Y."/>
            <person name="Ji L."/>
            <person name="Huang Q."/>
            <person name="Vassylyev D.G."/>
            <person name="Chen X."/>
            <person name="Ma J.B."/>
        </authorList>
    </citation>
    <scope>X-RAY CRYSTALLOGRAPHY (3.10 ANGSTROMS) IN COMPLEX WITH SUBSTRATE; S-ADENOSYL L-HOMOCYSTEINE AND MAGNESIUM ION</scope>
    <scope>COFACTOR</scope>
    <scope>SUBUNIT</scope>
    <scope>MUTAGENESIS OF TYR-109; TRP-333; LEU-604; ARG-701; GLU-796; GLU-799; HIS-800; ARG-856 AND HIS-860</scope>
</reference>
<name>HEN1_ARATH</name>
<accession>Q9C5Q8</accession>
<accession>O65309</accession>
<accession>Q945R3</accession>
<accession>Q9SUC2</accession>
<evidence type="ECO:0000255" key="1">
    <source>
        <dbReference type="PROSITE-ProRule" id="PRU00332"/>
    </source>
</evidence>
<evidence type="ECO:0000256" key="2">
    <source>
        <dbReference type="SAM" id="MobiDB-lite"/>
    </source>
</evidence>
<evidence type="ECO:0000269" key="3">
    <source>
    </source>
</evidence>
<evidence type="ECO:0000269" key="4">
    <source>
    </source>
</evidence>
<evidence type="ECO:0000269" key="5">
    <source>
    </source>
</evidence>
<evidence type="ECO:0000269" key="6">
    <source>
    </source>
</evidence>
<evidence type="ECO:0000269" key="7">
    <source>
    </source>
</evidence>
<evidence type="ECO:0000269" key="8">
    <source>
    </source>
</evidence>
<evidence type="ECO:0000305" key="9"/>
<evidence type="ECO:0007744" key="10">
    <source>
        <dbReference type="PDB" id="3HTX"/>
    </source>
</evidence>
<evidence type="ECO:0007829" key="11">
    <source>
        <dbReference type="PDB" id="3HTX"/>
    </source>
</evidence>
<gene>
    <name type="primary">HEN1</name>
    <name type="synonym">CRM2</name>
    <name type="ordered locus">At4g20910</name>
    <name type="ORF">T13K14.70</name>
</gene>
<organism>
    <name type="scientific">Arabidopsis thaliana</name>
    <name type="common">Mouse-ear cress</name>
    <dbReference type="NCBI Taxonomy" id="3702"/>
    <lineage>
        <taxon>Eukaryota</taxon>
        <taxon>Viridiplantae</taxon>
        <taxon>Streptophyta</taxon>
        <taxon>Embryophyta</taxon>
        <taxon>Tracheophyta</taxon>
        <taxon>Spermatophyta</taxon>
        <taxon>Magnoliopsida</taxon>
        <taxon>eudicotyledons</taxon>
        <taxon>Gunneridae</taxon>
        <taxon>Pentapetalae</taxon>
        <taxon>rosids</taxon>
        <taxon>malvids</taxon>
        <taxon>Brassicales</taxon>
        <taxon>Brassicaceae</taxon>
        <taxon>Camelineae</taxon>
        <taxon>Arabidopsis</taxon>
    </lineage>
</organism>
<dbReference type="EC" id="2.1.1.386" evidence="9"/>
<dbReference type="EMBL" id="AF060248">
    <property type="protein sequence ID" value="AAC97105.1"/>
    <property type="molecule type" value="Genomic_DNA"/>
</dbReference>
<dbReference type="EMBL" id="AF411383">
    <property type="protein sequence ID" value="AAL05056.1"/>
    <property type="molecule type" value="mRNA"/>
</dbReference>
<dbReference type="EMBL" id="AF327068">
    <property type="protein sequence ID" value="AAK16435.1"/>
    <property type="molecule type" value="mRNA"/>
</dbReference>
<dbReference type="EMBL" id="AL080282">
    <property type="protein sequence ID" value="CAB45886.1"/>
    <property type="status" value="ALT_SEQ"/>
    <property type="molecule type" value="Genomic_DNA"/>
</dbReference>
<dbReference type="EMBL" id="AL161553">
    <property type="protein sequence ID" value="CAB79091.1"/>
    <property type="status" value="ALT_SEQ"/>
    <property type="molecule type" value="Genomic_DNA"/>
</dbReference>
<dbReference type="EMBL" id="CP002687">
    <property type="protein sequence ID" value="AEE84374.1"/>
    <property type="molecule type" value="Genomic_DNA"/>
</dbReference>
<dbReference type="EMBL" id="CP002687">
    <property type="protein sequence ID" value="AEE84375.1"/>
    <property type="molecule type" value="Genomic_DNA"/>
</dbReference>
<dbReference type="PIR" id="T10633">
    <property type="entry name" value="T10633"/>
</dbReference>
<dbReference type="RefSeq" id="NP_001190782.1">
    <property type="nucleotide sequence ID" value="NM_001203853.2"/>
</dbReference>
<dbReference type="RefSeq" id="NP_567616.1">
    <property type="nucleotide sequence ID" value="NM_118209.3"/>
</dbReference>
<dbReference type="PDB" id="3HTX">
    <property type="method" value="X-ray"/>
    <property type="resolution" value="3.10 A"/>
    <property type="chains" value="A/D=1-942"/>
</dbReference>
<dbReference type="PDBsum" id="3HTX"/>
<dbReference type="SMR" id="Q9C5Q8"/>
<dbReference type="BioGRID" id="13130">
    <property type="interactions" value="3"/>
</dbReference>
<dbReference type="FunCoup" id="Q9C5Q8">
    <property type="interactions" value="1528"/>
</dbReference>
<dbReference type="STRING" id="3702.Q9C5Q8"/>
<dbReference type="iPTMnet" id="Q9C5Q8"/>
<dbReference type="PaxDb" id="3702-AT4G20910.2"/>
<dbReference type="ProteomicsDB" id="230384"/>
<dbReference type="EnsemblPlants" id="AT4G20910.1">
    <property type="protein sequence ID" value="AT4G20910.1"/>
    <property type="gene ID" value="AT4G20910"/>
</dbReference>
<dbReference type="EnsemblPlants" id="AT4G20910.2">
    <property type="protein sequence ID" value="AT4G20910.2"/>
    <property type="gene ID" value="AT4G20910"/>
</dbReference>
<dbReference type="GeneID" id="827839"/>
<dbReference type="Gramene" id="AT4G20910.1">
    <property type="protein sequence ID" value="AT4G20910.1"/>
    <property type="gene ID" value="AT4G20910"/>
</dbReference>
<dbReference type="Gramene" id="AT4G20910.2">
    <property type="protein sequence ID" value="AT4G20910.2"/>
    <property type="gene ID" value="AT4G20910"/>
</dbReference>
<dbReference type="KEGG" id="ath:AT4G20910"/>
<dbReference type="Araport" id="AT4G20910"/>
<dbReference type="TAIR" id="AT4G20910">
    <property type="gene designation" value="HEN1"/>
</dbReference>
<dbReference type="eggNOG" id="KOG1045">
    <property type="taxonomic scope" value="Eukaryota"/>
</dbReference>
<dbReference type="HOGENOM" id="CLU_001342_0_0_1"/>
<dbReference type="InParanoid" id="Q9C5Q8"/>
<dbReference type="OMA" id="ELLWEWP"/>
<dbReference type="PhylomeDB" id="Q9C5Q8"/>
<dbReference type="BioCyc" id="ARA:AT4G20910-MONOMER"/>
<dbReference type="BioCyc" id="MetaCyc:AT4G20910-MONOMER"/>
<dbReference type="EvolutionaryTrace" id="Q9C5Q8"/>
<dbReference type="PRO" id="PR:Q9C5Q8"/>
<dbReference type="Proteomes" id="UP000006548">
    <property type="component" value="Chromosome 4"/>
</dbReference>
<dbReference type="ExpressionAtlas" id="Q9C5Q8">
    <property type="expression patterns" value="baseline and differential"/>
</dbReference>
<dbReference type="GO" id="GO:0005737">
    <property type="term" value="C:cytoplasm"/>
    <property type="evidence" value="ECO:0000314"/>
    <property type="project" value="TAIR"/>
</dbReference>
<dbReference type="GO" id="GO:0005634">
    <property type="term" value="C:nucleus"/>
    <property type="evidence" value="ECO:0000314"/>
    <property type="project" value="TAIR"/>
</dbReference>
<dbReference type="GO" id="GO:0046872">
    <property type="term" value="F:metal ion binding"/>
    <property type="evidence" value="ECO:0007669"/>
    <property type="project" value="UniProtKB-KW"/>
</dbReference>
<dbReference type="GO" id="GO:0003755">
    <property type="term" value="F:peptidyl-prolyl cis-trans isomerase activity"/>
    <property type="evidence" value="ECO:0007669"/>
    <property type="project" value="InterPro"/>
</dbReference>
<dbReference type="GO" id="GO:0003723">
    <property type="term" value="F:RNA binding"/>
    <property type="evidence" value="ECO:0007669"/>
    <property type="project" value="UniProtKB-KW"/>
</dbReference>
<dbReference type="GO" id="GO:0008173">
    <property type="term" value="F:RNA methyltransferase activity"/>
    <property type="evidence" value="ECO:0000314"/>
    <property type="project" value="TAIR"/>
</dbReference>
<dbReference type="GO" id="GO:0090486">
    <property type="term" value="F:small RNA 2'-O-methyltransferase activity"/>
    <property type="evidence" value="ECO:0007669"/>
    <property type="project" value="RHEA"/>
</dbReference>
<dbReference type="GO" id="GO:0010589">
    <property type="term" value="P:leaf proximal/distal pattern formation"/>
    <property type="evidence" value="ECO:0000315"/>
    <property type="project" value="TAIR"/>
</dbReference>
<dbReference type="GO" id="GO:0010305">
    <property type="term" value="P:leaf vascular tissue pattern formation"/>
    <property type="evidence" value="ECO:0000315"/>
    <property type="project" value="TAIR"/>
</dbReference>
<dbReference type="GO" id="GO:0035196">
    <property type="term" value="P:miRNA processing"/>
    <property type="evidence" value="ECO:0000315"/>
    <property type="project" value="TAIR"/>
</dbReference>
<dbReference type="GO" id="GO:0035279">
    <property type="term" value="P:miRNA-mediated gene silencing by mRNA destabilization"/>
    <property type="evidence" value="ECO:0000315"/>
    <property type="project" value="TAIR"/>
</dbReference>
<dbReference type="GO" id="GO:0009909">
    <property type="term" value="P:regulation of flower development"/>
    <property type="evidence" value="ECO:0000315"/>
    <property type="project" value="TAIR"/>
</dbReference>
<dbReference type="GO" id="GO:0001510">
    <property type="term" value="P:RNA methylation"/>
    <property type="evidence" value="ECO:0007669"/>
    <property type="project" value="InterPro"/>
</dbReference>
<dbReference type="GO" id="GO:0009616">
    <property type="term" value="P:RNAi-mediated antiviral immune response"/>
    <property type="evidence" value="ECO:0000315"/>
    <property type="project" value="TAIR"/>
</dbReference>
<dbReference type="GO" id="GO:0010093">
    <property type="term" value="P:specification of floral organ identity"/>
    <property type="evidence" value="ECO:0000315"/>
    <property type="project" value="TAIR"/>
</dbReference>
<dbReference type="GO" id="GO:0010267">
    <property type="term" value="P:ta-siRNA processing"/>
    <property type="evidence" value="ECO:0000315"/>
    <property type="project" value="FlyBase"/>
</dbReference>
<dbReference type="FunFam" id="3.40.50.150:FF:000215">
    <property type="entry name" value="Hua enhancer1"/>
    <property type="match status" value="1"/>
</dbReference>
<dbReference type="FunFam" id="3.30.160.20:FF:000058">
    <property type="entry name" value="Small RNA 2"/>
    <property type="match status" value="1"/>
</dbReference>
<dbReference type="Gene3D" id="3.10.50.40">
    <property type="match status" value="1"/>
</dbReference>
<dbReference type="Gene3D" id="3.30.160.20">
    <property type="match status" value="1"/>
</dbReference>
<dbReference type="Gene3D" id="3.40.50.150">
    <property type="entry name" value="Vaccinia Virus protein VP39"/>
    <property type="match status" value="1"/>
</dbReference>
<dbReference type="InterPro" id="IPR056755">
    <property type="entry name" value="DSRM_2"/>
</dbReference>
<dbReference type="InterPro" id="IPR026610">
    <property type="entry name" value="Hen1"/>
</dbReference>
<dbReference type="InterPro" id="IPR040870">
    <property type="entry name" value="HEN1_dsRBD2"/>
</dbReference>
<dbReference type="InterPro" id="IPR040813">
    <property type="entry name" value="Hen1_Lam_C"/>
</dbReference>
<dbReference type="InterPro" id="IPR006630">
    <property type="entry name" value="La_HTH"/>
</dbReference>
<dbReference type="InterPro" id="IPR025714">
    <property type="entry name" value="Methyltranfer_dom"/>
</dbReference>
<dbReference type="InterPro" id="IPR046357">
    <property type="entry name" value="PPIase_dom_sf"/>
</dbReference>
<dbReference type="InterPro" id="IPR029063">
    <property type="entry name" value="SAM-dependent_MTases_sf"/>
</dbReference>
<dbReference type="PANTHER" id="PTHR21404">
    <property type="entry name" value="HEN1"/>
    <property type="match status" value="1"/>
</dbReference>
<dbReference type="PANTHER" id="PTHR21404:SF3">
    <property type="entry name" value="SMALL RNA 2'-O-METHYLTRANSFERASE"/>
    <property type="match status" value="1"/>
</dbReference>
<dbReference type="Pfam" id="PF17842">
    <property type="entry name" value="dsRBD2"/>
    <property type="match status" value="1"/>
</dbReference>
<dbReference type="Pfam" id="PF24995">
    <property type="entry name" value="DSRM_2"/>
    <property type="match status" value="1"/>
</dbReference>
<dbReference type="Pfam" id="PF18441">
    <property type="entry name" value="Hen1_Lam_C"/>
    <property type="match status" value="1"/>
</dbReference>
<dbReference type="Pfam" id="PF21224">
    <property type="entry name" value="Hen1_LCD"/>
    <property type="match status" value="1"/>
</dbReference>
<dbReference type="Pfam" id="PF13847">
    <property type="entry name" value="Methyltransf_31"/>
    <property type="match status" value="1"/>
</dbReference>
<dbReference type="SUPFAM" id="SSF53335">
    <property type="entry name" value="S-adenosyl-L-methionine-dependent methyltransferases"/>
    <property type="match status" value="1"/>
</dbReference>
<dbReference type="PROSITE" id="PS50961">
    <property type="entry name" value="HTH_LA"/>
    <property type="match status" value="1"/>
</dbReference>
<proteinExistence type="evidence at protein level"/>
<protein>
    <recommendedName>
        <fullName>Small RNA 2'-O-methyltransferase</fullName>
        <ecNumber evidence="9">2.1.1.386</ecNumber>
    </recommendedName>
    <alternativeName>
        <fullName>Protein CORYMBOSA 2</fullName>
    </alternativeName>
    <alternativeName>
        <fullName>Protein HUA ENHANCER 1</fullName>
    </alternativeName>
    <alternativeName>
        <fullName>S-adenosylmethionine-dependent RNA methyltransferase HEN1</fullName>
    </alternativeName>
</protein>